<protein>
    <recommendedName>
        <fullName evidence="20">Transcription factor PIF5</fullName>
    </recommendedName>
    <alternativeName>
        <fullName evidence="16">Basic helix-loop-helix protein 65</fullName>
        <shortName evidence="16">AtbHLH65</shortName>
        <shortName evidence="16">bHLH 65</shortName>
    </alternativeName>
    <alternativeName>
        <fullName evidence="17">Phytochrome interacting factor-like 6</fullName>
    </alternativeName>
    <alternativeName>
        <fullName evidence="20">Phytochrome-interacting factor 5</fullName>
    </alternativeName>
    <alternativeName>
        <fullName evidence="18">Transcription factor EN 103</fullName>
    </alternativeName>
    <alternativeName>
        <fullName evidence="16">bHLH transcription factor bHLH065</fullName>
    </alternativeName>
</protein>
<comment type="function">
    <text evidence="5 6 7 8 10 11 15">Transcription factor acting negatively in the phytochrome B signaling pathway to promote the shade-avoidance response. Regulates PHYB abundance at the post-transcriptional level, possibly via the ubiquitin-proteasome pathway. Promotes ethylene activity in the dark. May regulate the expression of a subset of genes by binding to the G-box motif. Might be involved in the integration of light-signals to control both circadian and photomorphogenic processes. Activated by CRY1 and CRY2 in response to low blue light (LBL) by direct binding at chromatin on E-box variant 5'-CA[CT]GTG-3' to stimulate specific gene expression to adapt global physiology (e.g. hypocotyl elongation in low blue light) (PubMed:26724867).</text>
</comment>
<comment type="subunit">
    <text evidence="1 5 6 7 13 14 15 21">Homodimer (By similarity). Interacts specifically with the Pfr form of phytochrome B and with TOC1/APRR1. May form a heterodimer with PIF3. Interacts with PHYB, CRY1 and CRY2 in the nucleus in response to low blue light (LBL) (PubMed:26724867). Interacts with TOPP4 (PubMed:26704640). Associates to PTAC12/HMR/PAP5 which acts as a transcriptional coactivator (PubMed:25944101).</text>
</comment>
<comment type="interaction">
    <interactant intactId="EBI-631622">
        <id>Q84LH8</id>
    </interactant>
    <interactant intactId="EBI-626001">
        <id>Q9FE22</id>
        <label>HFR1</label>
    </interactant>
    <organismsDiffer>false</organismsDiffer>
    <experiments>3</experiments>
</comment>
<comment type="subcellular location">
    <subcellularLocation>
        <location evidence="2 15">Nucleus</location>
    </subcellularLocation>
</comment>
<comment type="alternative products">
    <event type="alternative splicing"/>
    <isoform>
        <id>Q84LH8-1</id>
        <name>1</name>
        <sequence type="displayed"/>
    </isoform>
    <isoform>
        <id>Q84LH8-2</id>
        <name>2</name>
        <sequence type="described" ref="VSP_032846"/>
    </isoform>
    <isoform>
        <id>Q84LH8-3</id>
        <name>3</name>
        <sequence type="described" ref="VSP_032844 VSP_032845"/>
    </isoform>
</comment>
<comment type="tissue specificity">
    <text evidence="4 12">Mainly expressed in leaves and seedlings, and, to a lower extent, in stems, fruits, flowers and roots.</text>
</comment>
<comment type="developmental stage">
    <text evidence="6 12">Circadian-controlled expression (PubMed:15356333). Expressed transiently in early developing seeds, later accumulates progressively in maturating seeds to reach a peak in dry seeds (PubMed:23708772). Fades out upon seed imbibition (PubMed:23708772).</text>
</comment>
<comment type="induction">
    <text evidence="5 8 10 12">Down-regulated by brassinolids (BL), but up-regulated by cold (PubMed:23708772). Follows a free-running robust circadian rhythm, with higher levels during the light phase (PubMed:23708772). Rapidly induced by light in etiolated plants. Up-regulated by white light. Rapid degradation after red light exposure (at protein level). Accumulates to high levels in the dark, is selectively degraded in response to red light and remains at high levels under shade-mimicking conditions.</text>
</comment>
<comment type="domain">
    <text>The active phytochrome binding (APB) motif (26-39) is involved in interaction with PHYB and is required for proteasome-mediated degradation.</text>
</comment>
<comment type="PTM">
    <text evidence="9 10">Phosphorylated. Additional phosphorylations induced within 60 seconds following phytochrome B photoactivation.</text>
</comment>
<comment type="PTM">
    <text evidence="14">Dephosphorylated by TOPP4 during photomorphogenesis, leading to subsequent degradation of PIF5 by the proteasomal pathway.</text>
</comment>
<comment type="miscellaneous">
    <molecule>Isoform 2</molecule>
    <text evidence="21">May be due to a competing acceptor splice site.</text>
</comment>
<comment type="miscellaneous">
    <molecule>Isoform 3</molecule>
    <text evidence="21">May be due to a competing acceptor splice site.</text>
</comment>
<reference key="1">
    <citation type="journal article" date="2003" name="Mol. Biol. Evol.">
        <title>The basic helix-loop-helix transcription factor family in plants: a genome-wide study of protein structure and functional diversity.</title>
        <authorList>
            <person name="Heim M.A."/>
            <person name="Jakoby M."/>
            <person name="Werber M."/>
            <person name="Martin C."/>
            <person name="Weisshaar B."/>
            <person name="Bailey P.C."/>
        </authorList>
    </citation>
    <scope>NUCLEOTIDE SEQUENCE [MRNA] (ISOFORM 2)</scope>
    <scope>TISSUE SPECIFICITY</scope>
    <scope>GENE FAMILY</scope>
    <scope>NOMENCLATURE</scope>
    <source>
        <strain>cv. Columbia</strain>
    </source>
</reference>
<reference key="2">
    <citation type="journal article" date="2003" name="Plant Cell Physiol.">
        <title>A link between circadian-controlled bHLH factors and the APRR1/TOC1 quintet in Arabidopsis thaliana.</title>
        <authorList>
            <person name="Yamashino T."/>
            <person name="Matsushika A."/>
            <person name="Fujimori T."/>
            <person name="Sato S."/>
            <person name="Kato T."/>
            <person name="Tabata S."/>
            <person name="Mizuno T."/>
        </authorList>
    </citation>
    <scope>NUCLEOTIDE SEQUENCE [MRNA] (ISOFORM 1)</scope>
    <scope>FUNCTION</scope>
    <scope>INDUCTION</scope>
    <scope>INTERACTION WITH TOC1/APRR1</scope>
    <source>
        <strain>cv. Columbia</strain>
    </source>
</reference>
<reference key="3">
    <citation type="journal article" date="2000" name="Nature">
        <title>Sequence and analysis of chromosome 3 of the plant Arabidopsis thaliana.</title>
        <authorList>
            <person name="Salanoubat M."/>
            <person name="Lemcke K."/>
            <person name="Rieger M."/>
            <person name="Ansorge W."/>
            <person name="Unseld M."/>
            <person name="Fartmann B."/>
            <person name="Valle G."/>
            <person name="Bloecker H."/>
            <person name="Perez-Alonso M."/>
            <person name="Obermaier B."/>
            <person name="Delseny M."/>
            <person name="Boutry M."/>
            <person name="Grivell L.A."/>
            <person name="Mache R."/>
            <person name="Puigdomenech P."/>
            <person name="De Simone V."/>
            <person name="Choisne N."/>
            <person name="Artiguenave F."/>
            <person name="Robert C."/>
            <person name="Brottier P."/>
            <person name="Wincker P."/>
            <person name="Cattolico L."/>
            <person name="Weissenbach J."/>
            <person name="Saurin W."/>
            <person name="Quetier F."/>
            <person name="Schaefer M."/>
            <person name="Mueller-Auer S."/>
            <person name="Gabel C."/>
            <person name="Fuchs M."/>
            <person name="Benes V."/>
            <person name="Wurmbach E."/>
            <person name="Drzonek H."/>
            <person name="Erfle H."/>
            <person name="Jordan N."/>
            <person name="Bangert S."/>
            <person name="Wiedelmann R."/>
            <person name="Kranz H."/>
            <person name="Voss H."/>
            <person name="Holland R."/>
            <person name="Brandt P."/>
            <person name="Nyakatura G."/>
            <person name="Vezzi A."/>
            <person name="D'Angelo M."/>
            <person name="Pallavicini A."/>
            <person name="Toppo S."/>
            <person name="Simionati B."/>
            <person name="Conrad A."/>
            <person name="Hornischer K."/>
            <person name="Kauer G."/>
            <person name="Loehnert T.-H."/>
            <person name="Nordsiek G."/>
            <person name="Reichelt J."/>
            <person name="Scharfe M."/>
            <person name="Schoen O."/>
            <person name="Bargues M."/>
            <person name="Terol J."/>
            <person name="Climent J."/>
            <person name="Navarro P."/>
            <person name="Collado C."/>
            <person name="Perez-Perez A."/>
            <person name="Ottenwaelder B."/>
            <person name="Duchemin D."/>
            <person name="Cooke R."/>
            <person name="Laudie M."/>
            <person name="Berger-Llauro C."/>
            <person name="Purnelle B."/>
            <person name="Masuy D."/>
            <person name="de Haan M."/>
            <person name="Maarse A.C."/>
            <person name="Alcaraz J.-P."/>
            <person name="Cottet A."/>
            <person name="Casacuberta E."/>
            <person name="Monfort A."/>
            <person name="Argiriou A."/>
            <person name="Flores M."/>
            <person name="Liguori R."/>
            <person name="Vitale D."/>
            <person name="Mannhaupt G."/>
            <person name="Haase D."/>
            <person name="Schoof H."/>
            <person name="Rudd S."/>
            <person name="Zaccaria P."/>
            <person name="Mewes H.-W."/>
            <person name="Mayer K.F.X."/>
            <person name="Kaul S."/>
            <person name="Town C.D."/>
            <person name="Koo H.L."/>
            <person name="Tallon L.J."/>
            <person name="Jenkins J."/>
            <person name="Rooney T."/>
            <person name="Rizzo M."/>
            <person name="Walts A."/>
            <person name="Utterback T."/>
            <person name="Fujii C.Y."/>
            <person name="Shea T.P."/>
            <person name="Creasy T.H."/>
            <person name="Haas B."/>
            <person name="Maiti R."/>
            <person name="Wu D."/>
            <person name="Peterson J."/>
            <person name="Van Aken S."/>
            <person name="Pai G."/>
            <person name="Militscher J."/>
            <person name="Sellers P."/>
            <person name="Gill J.E."/>
            <person name="Feldblyum T.V."/>
            <person name="Preuss D."/>
            <person name="Lin X."/>
            <person name="Nierman W.C."/>
            <person name="Salzberg S.L."/>
            <person name="White O."/>
            <person name="Venter J.C."/>
            <person name="Fraser C.M."/>
            <person name="Kaneko T."/>
            <person name="Nakamura Y."/>
            <person name="Sato S."/>
            <person name="Kato T."/>
            <person name="Asamizu E."/>
            <person name="Sasamoto S."/>
            <person name="Kimura T."/>
            <person name="Idesawa K."/>
            <person name="Kawashima K."/>
            <person name="Kishida Y."/>
            <person name="Kiyokawa C."/>
            <person name="Kohara M."/>
            <person name="Matsumoto M."/>
            <person name="Matsuno A."/>
            <person name="Muraki A."/>
            <person name="Nakayama S."/>
            <person name="Nakazaki N."/>
            <person name="Shinpo S."/>
            <person name="Takeuchi C."/>
            <person name="Wada T."/>
            <person name="Watanabe A."/>
            <person name="Yamada M."/>
            <person name="Yasuda M."/>
            <person name="Tabata S."/>
        </authorList>
    </citation>
    <scope>NUCLEOTIDE SEQUENCE [LARGE SCALE GENOMIC DNA]</scope>
    <source>
        <strain>cv. Columbia</strain>
    </source>
</reference>
<reference key="4">
    <citation type="journal article" date="2017" name="Plant J.">
        <title>Araport11: a complete reannotation of the Arabidopsis thaliana reference genome.</title>
        <authorList>
            <person name="Cheng C.Y."/>
            <person name="Krishnakumar V."/>
            <person name="Chan A.P."/>
            <person name="Thibaud-Nissen F."/>
            <person name="Schobel S."/>
            <person name="Town C.D."/>
        </authorList>
    </citation>
    <scope>GENOME REANNOTATION</scope>
    <source>
        <strain>cv. Columbia</strain>
    </source>
</reference>
<reference key="5">
    <citation type="journal article" date="2003" name="Science">
        <title>Empirical analysis of transcriptional activity in the Arabidopsis genome.</title>
        <authorList>
            <person name="Yamada K."/>
            <person name="Lim J."/>
            <person name="Dale J.M."/>
            <person name="Chen H."/>
            <person name="Shinn P."/>
            <person name="Palm C.J."/>
            <person name="Southwick A.M."/>
            <person name="Wu H.C."/>
            <person name="Kim C.J."/>
            <person name="Nguyen M."/>
            <person name="Pham P.K."/>
            <person name="Cheuk R.F."/>
            <person name="Karlin-Newmann G."/>
            <person name="Liu S.X."/>
            <person name="Lam B."/>
            <person name="Sakano H."/>
            <person name="Wu T."/>
            <person name="Yu G."/>
            <person name="Miranda M."/>
            <person name="Quach H.L."/>
            <person name="Tripp M."/>
            <person name="Chang C.H."/>
            <person name="Lee J.M."/>
            <person name="Toriumi M.J."/>
            <person name="Chan M.M."/>
            <person name="Tang C.C."/>
            <person name="Onodera C.S."/>
            <person name="Deng J.M."/>
            <person name="Akiyama K."/>
            <person name="Ansari Y."/>
            <person name="Arakawa T."/>
            <person name="Banh J."/>
            <person name="Banno F."/>
            <person name="Bowser L."/>
            <person name="Brooks S.Y."/>
            <person name="Carninci P."/>
            <person name="Chao Q."/>
            <person name="Choy N."/>
            <person name="Enju A."/>
            <person name="Goldsmith A.D."/>
            <person name="Gurjal M."/>
            <person name="Hansen N.F."/>
            <person name="Hayashizaki Y."/>
            <person name="Johnson-Hopson C."/>
            <person name="Hsuan V.W."/>
            <person name="Iida K."/>
            <person name="Karnes M."/>
            <person name="Khan S."/>
            <person name="Koesema E."/>
            <person name="Ishida J."/>
            <person name="Jiang P.X."/>
            <person name="Jones T."/>
            <person name="Kawai J."/>
            <person name="Kamiya A."/>
            <person name="Meyers C."/>
            <person name="Nakajima M."/>
            <person name="Narusaka M."/>
            <person name="Seki M."/>
            <person name="Sakurai T."/>
            <person name="Satou M."/>
            <person name="Tamse R."/>
            <person name="Vaysberg M."/>
            <person name="Wallender E.K."/>
            <person name="Wong C."/>
            <person name="Yamamura Y."/>
            <person name="Yuan S."/>
            <person name="Shinozaki K."/>
            <person name="Davis R.W."/>
            <person name="Theologis A."/>
            <person name="Ecker J.R."/>
        </authorList>
    </citation>
    <scope>NUCLEOTIDE SEQUENCE [LARGE SCALE MRNA] (ISOFORM 3)</scope>
    <source>
        <strain>cv. Columbia</strain>
    </source>
</reference>
<reference key="6">
    <citation type="journal article" date="2003" name="Plant Cell">
        <title>The Arabidopsis basic/helix-loop-helix transcription factor family.</title>
        <authorList>
            <person name="Toledo-Ortiz G."/>
            <person name="Huq E."/>
            <person name="Quail P.H."/>
        </authorList>
    </citation>
    <scope>GENE FAMILY</scope>
</reference>
<reference key="7">
    <citation type="journal article" date="2003" name="Plant Cell">
        <title>Update on the basic helix-loop-helix transcription factor gene family in Arabidopsis thaliana.</title>
        <authorList>
            <person name="Bailey P.C."/>
            <person name="Martin C."/>
            <person name="Toledo-Ortiz G."/>
            <person name="Quail P.H."/>
            <person name="Huq E."/>
            <person name="Heim M.A."/>
            <person name="Jakoby M."/>
            <person name="Werber M."/>
            <person name="Weisshaar B."/>
        </authorList>
    </citation>
    <scope>GENE FAMILY</scope>
    <scope>NOMENCLATURE</scope>
</reference>
<reference key="8">
    <citation type="journal article" date="2004" name="Plant Cell">
        <title>A novel molecular recognition motif necessary for targeting photoactivated phytochrome signaling to specific basic helix-loop-helix transcription factors.</title>
        <authorList>
            <person name="Khanna R."/>
            <person name="Huq E."/>
            <person name="Kikis E.A."/>
            <person name="Al-Sady B."/>
            <person name="Lanzatella C."/>
            <person name="Quail P.H."/>
        </authorList>
    </citation>
    <scope>FUNCTION</scope>
    <scope>MUTAGENESIS OF GLU-31; LEU-32; GLY-37 AND GLN-38</scope>
    <scope>INTERACTION WITH PHYB</scope>
</reference>
<reference key="9">
    <citation type="journal article" date="2004" name="Plant Cell Physiol.">
        <title>Circadian-controlled basic/helix-loop-helix factor, PIL6, implicated in light-signal transduction in Arabidopsis thaliana.</title>
        <authorList>
            <person name="Fujimori T."/>
            <person name="Yamashino T."/>
            <person name="Kato T."/>
            <person name="Mizuno T."/>
        </authorList>
    </citation>
    <scope>FUNCTION</scope>
    <scope>DEVELOPMENTAL STAGE</scope>
    <scope>INTERACTION WITH TOC1/APRR1 AND PIF3</scope>
</reference>
<reference key="10">
    <citation type="journal article" date="2007" name="Nature">
        <title>Rhythmic growth explained by coincidence between internal and external cues.</title>
        <authorList>
            <person name="Nozue K."/>
            <person name="Covington M.F."/>
            <person name="Duek P.D."/>
            <person name="Lorrain S."/>
            <person name="Fankhauser C."/>
            <person name="Harmer S.L."/>
            <person name="Maloof J.N."/>
        </authorList>
    </citation>
    <scope>FUNCTION</scope>
    <scope>INDUCTION</scope>
</reference>
<reference key="11">
    <citation type="journal article" date="2007" name="Plant Cell">
        <title>The basic helix-loop-helix transcription factor PIF5 acts on ethylene biosynthesis and phytochrome signaling by distinct mechanisms.</title>
        <authorList>
            <person name="Khanna R."/>
            <person name="Shen Y."/>
            <person name="Marion C.M."/>
            <person name="Tsuchisaka A."/>
            <person name="Theologis A."/>
            <person name="Schaefer E."/>
            <person name="Quail P.H."/>
        </authorList>
    </citation>
    <scope>FUNCTION</scope>
    <scope>MUTAGENESIS OF GLY-37</scope>
</reference>
<reference key="12">
    <citation type="journal article" date="2007" name="Plant Physiol.">
        <title>Phytochrome induces rapid PIF5 phosphorylation and degradation in response to red-light activation.</title>
        <authorList>
            <person name="Shen Y."/>
            <person name="Khanna R."/>
            <person name="Carle C.M."/>
            <person name="Quail P.H."/>
        </authorList>
    </citation>
    <scope>PHOSPHORYLATION</scope>
</reference>
<reference key="13">
    <citation type="journal article" date="2008" name="Plant J.">
        <title>Phytochrome-mediated inhibition of shade avoidance involves degradation of growth-promoting bHLH transcription factors.</title>
        <authorList>
            <person name="Lorrain S."/>
            <person name="Allen T."/>
            <person name="Duek P.D."/>
            <person name="Whitelam G.C."/>
            <person name="Fankhauser C."/>
        </authorList>
    </citation>
    <scope>FUNCTION</scope>
    <scope>PHOSPHORYLATION</scope>
    <scope>INDUCTION</scope>
</reference>
<reference key="14">
    <citation type="journal article" date="2013" name="Mol. Cells">
        <title>Phytochrome-interacting factors have both shared and distinct biological roles.</title>
        <authorList>
            <person name="Jeong J."/>
            <person name="Choi G."/>
        </authorList>
    </citation>
    <scope>TISSUE SPECIFICITY</scope>
    <scope>DEVELOPMENTAL STAGE</scope>
    <scope>INDUCTION BY COLD AND BRASSINOLIDS</scope>
    <scope>GENE FAMILY</scope>
    <scope>NOMENCLATURE</scope>
    <scope>REVIEW</scope>
</reference>
<reference key="15">
    <citation type="journal article" date="2015" name="Plant Cell">
        <title>HEMERA couples the proteolysis and transcriptional activity of PHYTOCHROME INTERACTING FACTORs in Arabidopsis photomorphogenesis.</title>
        <authorList>
            <person name="Qiu Y."/>
            <person name="Li M."/>
            <person name="Pasoreck E.K."/>
            <person name="Long L."/>
            <person name="Shi Y."/>
            <person name="Galvao R.M."/>
            <person name="Chou C.L."/>
            <person name="Wang H."/>
            <person name="Sun A.Y."/>
            <person name="Zhang Y.C."/>
            <person name="Jiang A."/>
            <person name="Chen M."/>
        </authorList>
    </citation>
    <scope>INTERACTION WITH PTAC12/HMR/PAP5</scope>
    <source>
        <strain>cv. Columbia</strain>
    </source>
</reference>
<reference key="16">
    <citation type="journal article" date="2016" name="Cell">
        <title>Cryptochromes interact directly with PIFs to control plant growth in limiting blue light.</title>
        <authorList>
            <person name="Pedmale U.V."/>
            <person name="Huang S.S."/>
            <person name="Zander M."/>
            <person name="Cole B.J."/>
            <person name="Hetzel J."/>
            <person name="Ljung K."/>
            <person name="Reis P.A."/>
            <person name="Sridevi P."/>
            <person name="Nito K."/>
            <person name="Nery J.R."/>
            <person name="Ecker J.R."/>
            <person name="Chory J."/>
        </authorList>
    </citation>
    <scope>FUNCTION</scope>
    <scope>INTERACTION WITH PHYB; CRY1 AND CRY2</scope>
</reference>
<reference key="17">
    <citation type="journal article" date="2016" name="Plant Physiol.">
        <title>TOPP4 regulates the stability of PHYTOCHROME INTERACTING FACTOR5 during photomorphogenesis in Arabidopsis.</title>
        <authorList>
            <person name="Yue J."/>
            <person name="Qin Q."/>
            <person name="Meng S."/>
            <person name="Jing H."/>
            <person name="Gou X."/>
            <person name="Li J."/>
            <person name="Hou S."/>
        </authorList>
    </citation>
    <scope>INTERACTION WITH TOPP4</scope>
    <scope>PHOSPHORYLATION</scope>
</reference>
<proteinExistence type="evidence at protein level"/>
<gene>
    <name evidence="20" type="primary">PIF5</name>
    <name evidence="16" type="synonym">BHLH65</name>
    <name evidence="18" type="synonym">EN103</name>
    <name evidence="17" type="synonym">PIL6</name>
    <name evidence="22" type="ordered locus">At3g59060</name>
    <name evidence="23" type="ORF">F17J16.110</name>
</gene>
<accession>Q84LH8</accession>
<accession>Q8RXG4</accession>
<accession>Q8S3D7</accession>
<accession>Q9LYT0</accession>
<name>PIF5_ARATH</name>
<evidence type="ECO:0000250" key="1">
    <source>
        <dbReference type="UniProtKB" id="Q8GZM7"/>
    </source>
</evidence>
<evidence type="ECO:0000255" key="2">
    <source>
        <dbReference type="PROSITE-ProRule" id="PRU00981"/>
    </source>
</evidence>
<evidence type="ECO:0000256" key="3">
    <source>
        <dbReference type="SAM" id="MobiDB-lite"/>
    </source>
</evidence>
<evidence type="ECO:0000269" key="4">
    <source>
    </source>
</evidence>
<evidence type="ECO:0000269" key="5">
    <source>
    </source>
</evidence>
<evidence type="ECO:0000269" key="6">
    <source>
    </source>
</evidence>
<evidence type="ECO:0000269" key="7">
    <source>
    </source>
</evidence>
<evidence type="ECO:0000269" key="8">
    <source>
    </source>
</evidence>
<evidence type="ECO:0000269" key="9">
    <source>
    </source>
</evidence>
<evidence type="ECO:0000269" key="10">
    <source>
    </source>
</evidence>
<evidence type="ECO:0000269" key="11">
    <source>
    </source>
</evidence>
<evidence type="ECO:0000269" key="12">
    <source>
    </source>
</evidence>
<evidence type="ECO:0000269" key="13">
    <source>
    </source>
</evidence>
<evidence type="ECO:0000269" key="14">
    <source>
    </source>
</evidence>
<evidence type="ECO:0000269" key="15">
    <source>
    </source>
</evidence>
<evidence type="ECO:0000303" key="16">
    <source>
    </source>
</evidence>
<evidence type="ECO:0000303" key="17">
    <source>
    </source>
</evidence>
<evidence type="ECO:0000303" key="18">
    <source>
    </source>
</evidence>
<evidence type="ECO:0000303" key="19">
    <source>
    </source>
</evidence>
<evidence type="ECO:0000303" key="20">
    <source>
    </source>
</evidence>
<evidence type="ECO:0000305" key="21"/>
<evidence type="ECO:0000312" key="22">
    <source>
        <dbReference type="Araport" id="AT3G59060"/>
    </source>
</evidence>
<evidence type="ECO:0000312" key="23">
    <source>
        <dbReference type="EMBL" id="CAB86934.1"/>
    </source>
</evidence>
<organism>
    <name type="scientific">Arabidopsis thaliana</name>
    <name type="common">Mouse-ear cress</name>
    <dbReference type="NCBI Taxonomy" id="3702"/>
    <lineage>
        <taxon>Eukaryota</taxon>
        <taxon>Viridiplantae</taxon>
        <taxon>Streptophyta</taxon>
        <taxon>Embryophyta</taxon>
        <taxon>Tracheophyta</taxon>
        <taxon>Spermatophyta</taxon>
        <taxon>Magnoliopsida</taxon>
        <taxon>eudicotyledons</taxon>
        <taxon>Gunneridae</taxon>
        <taxon>Pentapetalae</taxon>
        <taxon>rosids</taxon>
        <taxon>malvids</taxon>
        <taxon>Brassicales</taxon>
        <taxon>Brassicaceae</taxon>
        <taxon>Camelineae</taxon>
        <taxon>Arabidopsis</taxon>
    </lineage>
</organism>
<sequence length="444" mass="49302">MEQVFADWNFEDNFHMSTNKRSIRPEDELVELLWRDGQVVLQSQARREPSVQVQTHKQETLRKPNNIFLDNQETVQKPNYAALDDQETVSWIQYPPDDVIDPFESEFSSHFFSSIDHLGGPEKPRTIEETVKHEAQAMAPPKFRSSVITVGPSHCGSNQSTNIHQATTLPVSMSDRSKNVEERLDTSSGGSSGCSYGRNNKETVSGTSVTIDRKRKHVMDADQESVSQSDIGLTSTDDQTMGNKSSQRSGSTRRSRAAEVHNLSERRRRDRINERMKALQELIPHCSRTDKASILDEAIDYLKSLQMQLQVMWMGSGMAAAAAAAASPMMFPGVQSSPYINQMAMQSQMQLSQFPVMNRSAPQNHPGLVCQNPVQLQLQAQNQILSEQLARYMGGIPQMPPAGNQMQTVQQQPADMLGFGSPAGPQSQLSAPATTDSLHMGKIG</sequence>
<keyword id="KW-0025">Alternative splicing</keyword>
<keyword id="KW-0238">DNA-binding</keyword>
<keyword id="KW-0539">Nucleus</keyword>
<keyword id="KW-0597">Phosphoprotein</keyword>
<keyword id="KW-0607">Phytochrome signaling pathway</keyword>
<keyword id="KW-1185">Reference proteome</keyword>
<keyword id="KW-0804">Transcription</keyword>
<keyword id="KW-0805">Transcription regulation</keyword>
<dbReference type="EMBL" id="AF488598">
    <property type="protein sequence ID" value="AAM10954.1"/>
    <property type="molecule type" value="mRNA"/>
</dbReference>
<dbReference type="EMBL" id="AB103112">
    <property type="protein sequence ID" value="BAC56978.1"/>
    <property type="molecule type" value="Transcribed_RNA"/>
</dbReference>
<dbReference type="EMBL" id="AL163527">
    <property type="protein sequence ID" value="CAB86934.1"/>
    <property type="molecule type" value="Genomic_DNA"/>
</dbReference>
<dbReference type="EMBL" id="CP002686">
    <property type="protein sequence ID" value="AEE79868.1"/>
    <property type="molecule type" value="Genomic_DNA"/>
</dbReference>
<dbReference type="EMBL" id="CP002686">
    <property type="protein sequence ID" value="AEE79869.1"/>
    <property type="molecule type" value="Genomic_DNA"/>
</dbReference>
<dbReference type="EMBL" id="CP002686">
    <property type="protein sequence ID" value="AEE79870.1"/>
    <property type="molecule type" value="Genomic_DNA"/>
</dbReference>
<dbReference type="EMBL" id="CP002686">
    <property type="protein sequence ID" value="AEE79871.1"/>
    <property type="molecule type" value="Genomic_DNA"/>
</dbReference>
<dbReference type="EMBL" id="AY081271">
    <property type="protein sequence ID" value="AAL91160.1"/>
    <property type="molecule type" value="mRNA"/>
</dbReference>
<dbReference type="EMBL" id="BT000049">
    <property type="protein sequence ID" value="AAN15368.1"/>
    <property type="molecule type" value="mRNA"/>
</dbReference>
<dbReference type="PIR" id="T47788">
    <property type="entry name" value="T47788"/>
</dbReference>
<dbReference type="RefSeq" id="NP_001030889.1">
    <molecule id="Q84LH8-1"/>
    <property type="nucleotide sequence ID" value="NM_001035812.2"/>
</dbReference>
<dbReference type="RefSeq" id="NP_001030890.1">
    <molecule id="Q84LH8-1"/>
    <property type="nucleotide sequence ID" value="NM_001035813.2"/>
</dbReference>
<dbReference type="RefSeq" id="NP_191465.3">
    <molecule id="Q84LH8-1"/>
    <property type="nucleotide sequence ID" value="NM_115768.5"/>
</dbReference>
<dbReference type="RefSeq" id="NP_851021.1">
    <molecule id="Q84LH8-2"/>
    <property type="nucleotide sequence ID" value="NM_180690.2"/>
</dbReference>
<dbReference type="SMR" id="Q84LH8"/>
<dbReference type="BioGRID" id="10390">
    <property type="interactions" value="13"/>
</dbReference>
<dbReference type="FunCoup" id="Q84LH8">
    <property type="interactions" value="877"/>
</dbReference>
<dbReference type="IntAct" id="Q84LH8">
    <property type="interactions" value="4"/>
</dbReference>
<dbReference type="MINT" id="Q84LH8"/>
<dbReference type="STRING" id="3702.Q84LH8"/>
<dbReference type="iPTMnet" id="Q84LH8"/>
<dbReference type="PaxDb" id="3702-AT3G59060.4"/>
<dbReference type="ProteomicsDB" id="235112">
    <molecule id="Q84LH8-1"/>
</dbReference>
<dbReference type="EnsemblPlants" id="AT3G59060.1">
    <molecule id="Q84LH8-2"/>
    <property type="protein sequence ID" value="AT3G59060.1"/>
    <property type="gene ID" value="AT3G59060"/>
</dbReference>
<dbReference type="EnsemblPlants" id="AT3G59060.2">
    <molecule id="Q84LH8-1"/>
    <property type="protein sequence ID" value="AT3G59060.2"/>
    <property type="gene ID" value="AT3G59060"/>
</dbReference>
<dbReference type="EnsemblPlants" id="AT3G59060.3">
    <molecule id="Q84LH8-1"/>
    <property type="protein sequence ID" value="AT3G59060.3"/>
    <property type="gene ID" value="AT3G59060"/>
</dbReference>
<dbReference type="EnsemblPlants" id="AT3G59060.4">
    <molecule id="Q84LH8-1"/>
    <property type="protein sequence ID" value="AT3G59060.4"/>
    <property type="gene ID" value="AT3G59060"/>
</dbReference>
<dbReference type="GeneID" id="825075"/>
<dbReference type="Gramene" id="AT3G59060.1">
    <molecule id="Q84LH8-2"/>
    <property type="protein sequence ID" value="AT3G59060.1"/>
    <property type="gene ID" value="AT3G59060"/>
</dbReference>
<dbReference type="Gramene" id="AT3G59060.2">
    <molecule id="Q84LH8-1"/>
    <property type="protein sequence ID" value="AT3G59060.2"/>
    <property type="gene ID" value="AT3G59060"/>
</dbReference>
<dbReference type="Gramene" id="AT3G59060.3">
    <molecule id="Q84LH8-1"/>
    <property type="protein sequence ID" value="AT3G59060.3"/>
    <property type="gene ID" value="AT3G59060"/>
</dbReference>
<dbReference type="Gramene" id="AT3G59060.4">
    <molecule id="Q84LH8-1"/>
    <property type="protein sequence ID" value="AT3G59060.4"/>
    <property type="gene ID" value="AT3G59060"/>
</dbReference>
<dbReference type="KEGG" id="ath:AT3G59060"/>
<dbReference type="Araport" id="AT3G59060"/>
<dbReference type="TAIR" id="AT3G59060">
    <property type="gene designation" value="PIL6"/>
</dbReference>
<dbReference type="eggNOG" id="ENOG502QTIX">
    <property type="taxonomic scope" value="Eukaryota"/>
</dbReference>
<dbReference type="InParanoid" id="Q84LH8"/>
<dbReference type="OMA" id="THKHDQA"/>
<dbReference type="OrthoDB" id="690068at2759"/>
<dbReference type="PhylomeDB" id="Q84LH8"/>
<dbReference type="PRO" id="PR:Q84LH8"/>
<dbReference type="Proteomes" id="UP000006548">
    <property type="component" value="Chromosome 3"/>
</dbReference>
<dbReference type="ExpressionAtlas" id="Q84LH8">
    <property type="expression patterns" value="baseline and differential"/>
</dbReference>
<dbReference type="GO" id="GO:0005634">
    <property type="term" value="C:nucleus"/>
    <property type="evidence" value="ECO:0000314"/>
    <property type="project" value="UniProtKB"/>
</dbReference>
<dbReference type="GO" id="GO:0003677">
    <property type="term" value="F:DNA binding"/>
    <property type="evidence" value="ECO:0007669"/>
    <property type="project" value="UniProtKB-KW"/>
</dbReference>
<dbReference type="GO" id="GO:0003700">
    <property type="term" value="F:DNA-binding transcription factor activity"/>
    <property type="evidence" value="ECO:0000250"/>
    <property type="project" value="TAIR"/>
</dbReference>
<dbReference type="GO" id="GO:1990841">
    <property type="term" value="F:promoter-specific chromatin binding"/>
    <property type="evidence" value="ECO:0000353"/>
    <property type="project" value="TAIR"/>
</dbReference>
<dbReference type="GO" id="GO:0046983">
    <property type="term" value="F:protein dimerization activity"/>
    <property type="evidence" value="ECO:0007669"/>
    <property type="project" value="InterPro"/>
</dbReference>
<dbReference type="GO" id="GO:0009693">
    <property type="term" value="P:ethylene biosynthetic process"/>
    <property type="evidence" value="ECO:0000315"/>
    <property type="project" value="TAIR"/>
</dbReference>
<dbReference type="GO" id="GO:0009585">
    <property type="term" value="P:red, far-red light phototransduction"/>
    <property type="evidence" value="ECO:0000315"/>
    <property type="project" value="TAIR"/>
</dbReference>
<dbReference type="GO" id="GO:0010600">
    <property type="term" value="P:regulation of auxin biosynthetic process"/>
    <property type="evidence" value="ECO:0000314"/>
    <property type="project" value="TAIR"/>
</dbReference>
<dbReference type="GO" id="GO:0010928">
    <property type="term" value="P:regulation of auxin mediated signaling pathway"/>
    <property type="evidence" value="ECO:0000314"/>
    <property type="project" value="TAIR"/>
</dbReference>
<dbReference type="GO" id="GO:0009741">
    <property type="term" value="P:response to brassinosteroid"/>
    <property type="evidence" value="ECO:0000270"/>
    <property type="project" value="UniProtKB"/>
</dbReference>
<dbReference type="GO" id="GO:0009409">
    <property type="term" value="P:response to cold"/>
    <property type="evidence" value="ECO:0000270"/>
    <property type="project" value="UniProtKB"/>
</dbReference>
<dbReference type="GO" id="GO:0010244">
    <property type="term" value="P:response to low fluence blue light stimulus by blue low-fluence system"/>
    <property type="evidence" value="ECO:0000314"/>
    <property type="project" value="UniProtKB"/>
</dbReference>
<dbReference type="CDD" id="cd11445">
    <property type="entry name" value="bHLH_AtPIF_like"/>
    <property type="match status" value="1"/>
</dbReference>
<dbReference type="FunFam" id="4.10.280.10:FF:000004">
    <property type="entry name" value="Basic helix-loop-helix transcription factor"/>
    <property type="match status" value="1"/>
</dbReference>
<dbReference type="Gene3D" id="4.10.280.10">
    <property type="entry name" value="Helix-loop-helix DNA-binding domain"/>
    <property type="match status" value="1"/>
</dbReference>
<dbReference type="InterPro" id="IPR011598">
    <property type="entry name" value="bHLH_dom"/>
</dbReference>
<dbReference type="InterPro" id="IPR036638">
    <property type="entry name" value="HLH_DNA-bd_sf"/>
</dbReference>
<dbReference type="InterPro" id="IPR047265">
    <property type="entry name" value="PIF1-like_bHLH"/>
</dbReference>
<dbReference type="InterPro" id="IPR044273">
    <property type="entry name" value="PIF3-like"/>
</dbReference>
<dbReference type="PANTHER" id="PTHR46807:SF7">
    <property type="entry name" value="BHLH DOMAIN-CONTAINING PROTEIN"/>
    <property type="match status" value="1"/>
</dbReference>
<dbReference type="PANTHER" id="PTHR46807">
    <property type="entry name" value="TRANSCRIPTION FACTOR PIF3"/>
    <property type="match status" value="1"/>
</dbReference>
<dbReference type="Pfam" id="PF00010">
    <property type="entry name" value="HLH"/>
    <property type="match status" value="1"/>
</dbReference>
<dbReference type="SMART" id="SM00353">
    <property type="entry name" value="HLH"/>
    <property type="match status" value="1"/>
</dbReference>
<dbReference type="SUPFAM" id="SSF47459">
    <property type="entry name" value="HLH, helix-loop-helix DNA-binding domain"/>
    <property type="match status" value="1"/>
</dbReference>
<dbReference type="PROSITE" id="PS50888">
    <property type="entry name" value="BHLH"/>
    <property type="match status" value="1"/>
</dbReference>
<feature type="chain" id="PRO_0000328935" description="Transcription factor PIF5">
    <location>
        <begin position="1"/>
        <end position="444"/>
    </location>
</feature>
<feature type="domain" description="bHLH" evidence="2">
    <location>
        <begin position="256"/>
        <end position="305"/>
    </location>
</feature>
<feature type="region of interest" description="Involved in interaction with phyB">
    <location>
        <begin position="26"/>
        <end position="39"/>
    </location>
</feature>
<feature type="region of interest" description="Disordered" evidence="3">
    <location>
        <begin position="154"/>
        <end position="265"/>
    </location>
</feature>
<feature type="region of interest" description="Disordered" evidence="3">
    <location>
        <begin position="416"/>
        <end position="444"/>
    </location>
</feature>
<feature type="compositionally biased region" description="Polar residues" evidence="3">
    <location>
        <begin position="155"/>
        <end position="171"/>
    </location>
</feature>
<feature type="compositionally biased region" description="Basic and acidic residues" evidence="3">
    <location>
        <begin position="175"/>
        <end position="185"/>
    </location>
</feature>
<feature type="compositionally biased region" description="Low complexity" evidence="3">
    <location>
        <begin position="187"/>
        <end position="197"/>
    </location>
</feature>
<feature type="compositionally biased region" description="Polar residues" evidence="3">
    <location>
        <begin position="224"/>
        <end position="244"/>
    </location>
</feature>
<feature type="compositionally biased region" description="Basic and acidic residues" evidence="3">
    <location>
        <begin position="256"/>
        <end position="265"/>
    </location>
</feature>
<feature type="compositionally biased region" description="Polar residues" evidence="3">
    <location>
        <begin position="424"/>
        <end position="437"/>
    </location>
</feature>
<feature type="modified residue" description="Phosphoserine" evidence="1">
    <location>
        <position position="437"/>
    </location>
</feature>
<feature type="splice variant" id="VSP_032844" description="In isoform 3." evidence="19">
    <original>TDKASILDEAID</original>
    <variation>IKLRYWMKQLIT</variation>
    <location>
        <begin position="289"/>
        <end position="300"/>
    </location>
</feature>
<feature type="splice variant" id="VSP_032845" description="In isoform 3." evidence="19">
    <location>
        <begin position="301"/>
        <end position="444"/>
    </location>
</feature>
<feature type="splice variant" id="VSP_032846" description="In isoform 2." evidence="16">
    <location>
        <begin position="405"/>
        <end position="406"/>
    </location>
</feature>
<feature type="mutagenesis site" description="Loss of binding to PHYB." evidence="7">
    <original>E</original>
    <variation>A</variation>
    <location>
        <position position="31"/>
    </location>
</feature>
<feature type="mutagenesis site" description="Loss of binding to PHYB." evidence="7">
    <original>L</original>
    <variation>A</variation>
    <location>
        <position position="32"/>
    </location>
</feature>
<feature type="mutagenesis site" description="Loss of binding to PHYB." evidence="7 11">
    <original>G</original>
    <variation>A</variation>
    <location>
        <position position="37"/>
    </location>
</feature>
<feature type="mutagenesis site" description="Loss of binding to PHYB." evidence="7">
    <original>Q</original>
    <variation>A</variation>
    <location>
        <position position="38"/>
    </location>
</feature>
<feature type="sequence conflict" description="In Ref. 1; AAM10954." evidence="21" ref="1">
    <original>T</original>
    <variation>M</variation>
    <location>
        <position position="126"/>
    </location>
</feature>
<feature type="sequence conflict" description="In Ref. 5; AAN15368/AAL91160." evidence="21" ref="5">
    <original>S</original>
    <variation>N</variation>
    <location>
        <position position="174"/>
    </location>
</feature>
<feature type="sequence conflict" description="In Ref. 1; AAM10954." evidence="21" ref="1">
    <original>Q</original>
    <variation>L</variation>
    <location>
        <position position="371"/>
    </location>
</feature>